<evidence type="ECO:0000250" key="1"/>
<evidence type="ECO:0000255" key="2"/>
<evidence type="ECO:0000305" key="3"/>
<sequence>MLKFIQNNREITALLAVVLLFVLPGFLDRQYLSVQTLTMVYSSAQILILLAMGATLVMLTRNIDVSVGSITGMCAVLLGMLLNAGYSLPVACVATLLLGLLAGFFNGVLVAWLKIPAIVATLGTLGLYRGIMLLWTGGKWIEGLPAELKQLSAPLLLGVSAIGWLTIILVAFMAWLLAKTAFGRSFYATGDNLQGARQLGVRTEAIRIVAFSLNGCMAALAGIVFASQIGFIPNQTGTGLEMKAIAACVLGGISLLGGSGAIIGAVLGAWFLTQIDSVLVLLRIPAWWNDFIAGLVLLAVLVFDGRLRCALERNLRRQKYARFMTPPPSVKPASSGKKREAA</sequence>
<comment type="function">
    <text evidence="1">Part of the ABC transporter complex LsrABCD involved in autoinducer 2 (AI-2) import. Probably responsible for the translocation of the substrate across the membrane (By similarity).</text>
</comment>
<comment type="subunit">
    <text evidence="1">The complex is composed of two ATP-binding proteins (LsrA), two transmembrane proteins (LsrC and LsrD) and a solute-binding protein (LsrB).</text>
</comment>
<comment type="subcellular location">
    <subcellularLocation>
        <location evidence="1">Cell inner membrane</location>
        <topology evidence="1">Multi-pass membrane protein</topology>
    </subcellularLocation>
</comment>
<comment type="similarity">
    <text evidence="3">Belongs to the binding-protein-dependent transport system permease family. AraH/RbsC subfamily.</text>
</comment>
<dbReference type="EMBL" id="CP000948">
    <property type="protein sequence ID" value="ACB02724.1"/>
    <property type="molecule type" value="Genomic_DNA"/>
</dbReference>
<dbReference type="RefSeq" id="WP_000911184.1">
    <property type="nucleotide sequence ID" value="NC_010473.1"/>
</dbReference>
<dbReference type="KEGG" id="ecd:ECDH10B_1645"/>
<dbReference type="HOGENOM" id="CLU_028880_0_1_6"/>
<dbReference type="GO" id="GO:0005886">
    <property type="term" value="C:plasma membrane"/>
    <property type="evidence" value="ECO:0007669"/>
    <property type="project" value="UniProtKB-SubCell"/>
</dbReference>
<dbReference type="GO" id="GO:0022857">
    <property type="term" value="F:transmembrane transporter activity"/>
    <property type="evidence" value="ECO:0007669"/>
    <property type="project" value="InterPro"/>
</dbReference>
<dbReference type="CDD" id="cd06579">
    <property type="entry name" value="TM_PBP1_transp_AraH_like"/>
    <property type="match status" value="1"/>
</dbReference>
<dbReference type="InterPro" id="IPR001851">
    <property type="entry name" value="ABC_transp_permease"/>
</dbReference>
<dbReference type="NCBIfam" id="NF011961">
    <property type="entry name" value="PRK15432.1"/>
    <property type="match status" value="1"/>
</dbReference>
<dbReference type="PANTHER" id="PTHR32196">
    <property type="entry name" value="ABC TRANSPORTER PERMEASE PROTEIN YPHD-RELATED-RELATED"/>
    <property type="match status" value="1"/>
</dbReference>
<dbReference type="PANTHER" id="PTHR32196:SF29">
    <property type="entry name" value="AUTOINDUCER 2 IMPORT SYSTEM PERMEASE PROTEIN LSRC"/>
    <property type="match status" value="1"/>
</dbReference>
<dbReference type="Pfam" id="PF02653">
    <property type="entry name" value="BPD_transp_2"/>
    <property type="match status" value="1"/>
</dbReference>
<protein>
    <recommendedName>
        <fullName>Autoinducer 2 import system permease protein LsrC</fullName>
        <shortName>AI-2 import system permease protein LsrC</shortName>
    </recommendedName>
</protein>
<gene>
    <name type="primary">lsrC</name>
    <name type="ordered locus">ECDH10B_1645</name>
</gene>
<feature type="chain" id="PRO_0000351338" description="Autoinducer 2 import system permease protein LsrC">
    <location>
        <begin position="1"/>
        <end position="342"/>
    </location>
</feature>
<feature type="topological domain" description="Periplasmic" evidence="2">
    <location>
        <begin position="1"/>
        <end position="13"/>
    </location>
</feature>
<feature type="transmembrane region" description="Helical" evidence="2">
    <location>
        <begin position="14"/>
        <end position="34"/>
    </location>
</feature>
<feature type="topological domain" description="Cytoplasmic" evidence="2">
    <location>
        <begin position="35"/>
        <end position="38"/>
    </location>
</feature>
<feature type="transmembrane region" description="Helical" evidence="2">
    <location>
        <begin position="39"/>
        <end position="59"/>
    </location>
</feature>
<feature type="topological domain" description="Periplasmic" evidence="2">
    <location>
        <begin position="60"/>
        <end position="69"/>
    </location>
</feature>
<feature type="transmembrane region" description="Helical" evidence="2">
    <location>
        <begin position="70"/>
        <end position="90"/>
    </location>
</feature>
<feature type="topological domain" description="Cytoplasmic" evidence="2">
    <location>
        <begin position="91"/>
        <end position="92"/>
    </location>
</feature>
<feature type="transmembrane region" description="Helical" evidence="2">
    <location>
        <begin position="93"/>
        <end position="113"/>
    </location>
</feature>
<feature type="topological domain" description="Periplasmic" evidence="2">
    <location>
        <position position="114"/>
    </location>
</feature>
<feature type="transmembrane region" description="Helical" evidence="2">
    <location>
        <begin position="115"/>
        <end position="135"/>
    </location>
</feature>
<feature type="topological domain" description="Cytoplasmic" evidence="2">
    <location>
        <begin position="136"/>
        <end position="154"/>
    </location>
</feature>
<feature type="transmembrane region" description="Helical" evidence="2">
    <location>
        <begin position="155"/>
        <end position="175"/>
    </location>
</feature>
<feature type="topological domain" description="Periplasmic" evidence="2">
    <location>
        <begin position="176"/>
        <end position="212"/>
    </location>
</feature>
<feature type="transmembrane region" description="Helical" evidence="2">
    <location>
        <begin position="213"/>
        <end position="233"/>
    </location>
</feature>
<feature type="topological domain" description="Cytoplasmic" evidence="2">
    <location>
        <begin position="234"/>
        <end position="251"/>
    </location>
</feature>
<feature type="transmembrane region" description="Helical" evidence="2">
    <location>
        <begin position="252"/>
        <end position="272"/>
    </location>
</feature>
<feature type="topological domain" description="Periplasmic" evidence="2">
    <location>
        <begin position="273"/>
        <end position="283"/>
    </location>
</feature>
<feature type="transmembrane region" description="Helical" evidence="2">
    <location>
        <begin position="284"/>
        <end position="304"/>
    </location>
</feature>
<feature type="topological domain" description="Cytoplasmic" evidence="2">
    <location>
        <begin position="305"/>
        <end position="342"/>
    </location>
</feature>
<proteinExistence type="inferred from homology"/>
<name>LSRC_ECODH</name>
<keyword id="KW-0997">Cell inner membrane</keyword>
<keyword id="KW-1003">Cell membrane</keyword>
<keyword id="KW-0472">Membrane</keyword>
<keyword id="KW-0812">Transmembrane</keyword>
<keyword id="KW-1133">Transmembrane helix</keyword>
<keyword id="KW-0813">Transport</keyword>
<reference key="1">
    <citation type="journal article" date="2008" name="J. Bacteriol.">
        <title>The complete genome sequence of Escherichia coli DH10B: insights into the biology of a laboratory workhorse.</title>
        <authorList>
            <person name="Durfee T."/>
            <person name="Nelson R."/>
            <person name="Baldwin S."/>
            <person name="Plunkett G. III"/>
            <person name="Burland V."/>
            <person name="Mau B."/>
            <person name="Petrosino J.F."/>
            <person name="Qin X."/>
            <person name="Muzny D.M."/>
            <person name="Ayele M."/>
            <person name="Gibbs R.A."/>
            <person name="Csorgo B."/>
            <person name="Posfai G."/>
            <person name="Weinstock G.M."/>
            <person name="Blattner F.R."/>
        </authorList>
    </citation>
    <scope>NUCLEOTIDE SEQUENCE [LARGE SCALE GENOMIC DNA]</scope>
    <source>
        <strain>K12 / DH10B</strain>
    </source>
</reference>
<organism>
    <name type="scientific">Escherichia coli (strain K12 / DH10B)</name>
    <dbReference type="NCBI Taxonomy" id="316385"/>
    <lineage>
        <taxon>Bacteria</taxon>
        <taxon>Pseudomonadati</taxon>
        <taxon>Pseudomonadota</taxon>
        <taxon>Gammaproteobacteria</taxon>
        <taxon>Enterobacterales</taxon>
        <taxon>Enterobacteriaceae</taxon>
        <taxon>Escherichia</taxon>
    </lineage>
</organism>
<accession>B1XEA2</accession>